<organism>
    <name type="scientific">Escherichia fergusonii (strain ATCC 35469 / DSM 13698 / CCUG 18766 / IAM 14443 / JCM 21226 / LMG 7866 / NBRC 102419 / NCTC 12128 / CDC 0568-73)</name>
    <dbReference type="NCBI Taxonomy" id="585054"/>
    <lineage>
        <taxon>Bacteria</taxon>
        <taxon>Pseudomonadati</taxon>
        <taxon>Pseudomonadota</taxon>
        <taxon>Gammaproteobacteria</taxon>
        <taxon>Enterobacterales</taxon>
        <taxon>Enterobacteriaceae</taxon>
        <taxon>Escherichia</taxon>
    </lineage>
</organism>
<proteinExistence type="inferred from homology"/>
<sequence length="322" mass="35804">MDNFLALTLTGKKPVITEREINGVRWRWLGDGVLELTPLTPPQGALVISAGIHGNETAPVEMLDALLGAISHGEIPLRWRLLVIFGNPPALKQGKRYCHSDMNRMFGGRWQLFAESGETCRARELEQCLEDFFDQGKESVRWHLDLHTAIRGSLHPQFGVLPQRDIPWDEKFLTWLGTAGLEALVFHQAPGGTFTHFSARHFGALACTLELGKALPFGQNDLRQFAVTASAIAARVSGESVGVVRTPPIRYRVVSQITRHSPSFEMHMASDTLNFMPFKKGTLLAQDGEERFTVTHDVEYVLFPNPLVALGLRAGLMLEKIS</sequence>
<gene>
    <name evidence="1" type="primary">astE</name>
    <name type="ordered locus">EFER_1321</name>
</gene>
<dbReference type="EC" id="3.5.1.96" evidence="1"/>
<dbReference type="EMBL" id="CU928158">
    <property type="protein sequence ID" value="CAQ88845.1"/>
    <property type="molecule type" value="Genomic_DNA"/>
</dbReference>
<dbReference type="RefSeq" id="WP_000368480.1">
    <property type="nucleotide sequence ID" value="NC_011740.1"/>
</dbReference>
<dbReference type="SMR" id="B7LQ48"/>
<dbReference type="GeneID" id="75057635"/>
<dbReference type="KEGG" id="efe:EFER_1321"/>
<dbReference type="HOGENOM" id="CLU_071608_0_0_6"/>
<dbReference type="OrthoDB" id="5290473at2"/>
<dbReference type="UniPathway" id="UPA00185">
    <property type="reaction ID" value="UER00283"/>
</dbReference>
<dbReference type="Proteomes" id="UP000000745">
    <property type="component" value="Chromosome"/>
</dbReference>
<dbReference type="GO" id="GO:0016788">
    <property type="term" value="F:hydrolase activity, acting on ester bonds"/>
    <property type="evidence" value="ECO:0007669"/>
    <property type="project" value="UniProtKB-UniRule"/>
</dbReference>
<dbReference type="GO" id="GO:0009017">
    <property type="term" value="F:succinylglutamate desuccinylase activity"/>
    <property type="evidence" value="ECO:0007669"/>
    <property type="project" value="UniProtKB-EC"/>
</dbReference>
<dbReference type="GO" id="GO:0008270">
    <property type="term" value="F:zinc ion binding"/>
    <property type="evidence" value="ECO:0007669"/>
    <property type="project" value="UniProtKB-UniRule"/>
</dbReference>
<dbReference type="GO" id="GO:0019544">
    <property type="term" value="P:arginine catabolic process to glutamate"/>
    <property type="evidence" value="ECO:0007669"/>
    <property type="project" value="UniProtKB-UniRule"/>
</dbReference>
<dbReference type="GO" id="GO:0019545">
    <property type="term" value="P:arginine catabolic process to succinate"/>
    <property type="evidence" value="ECO:0007669"/>
    <property type="project" value="UniProtKB-UniRule"/>
</dbReference>
<dbReference type="CDD" id="cd03855">
    <property type="entry name" value="M14_ASTE"/>
    <property type="match status" value="1"/>
</dbReference>
<dbReference type="FunFam" id="3.40.630.10:FF:000017">
    <property type="entry name" value="Succinylglutamate desuccinylase"/>
    <property type="match status" value="1"/>
</dbReference>
<dbReference type="Gene3D" id="3.40.630.10">
    <property type="entry name" value="Zn peptidases"/>
    <property type="match status" value="1"/>
</dbReference>
<dbReference type="HAMAP" id="MF_00767">
    <property type="entry name" value="Arg_catab_AstE"/>
    <property type="match status" value="1"/>
</dbReference>
<dbReference type="InterPro" id="IPR050178">
    <property type="entry name" value="AspA/AstE_fam"/>
</dbReference>
<dbReference type="InterPro" id="IPR055438">
    <property type="entry name" value="AstE_AspA_cat"/>
</dbReference>
<dbReference type="InterPro" id="IPR007036">
    <property type="entry name" value="Aste_AspA_hybrid_dom"/>
</dbReference>
<dbReference type="InterPro" id="IPR016681">
    <property type="entry name" value="SuccinylGlu_desuccinylase"/>
</dbReference>
<dbReference type="NCBIfam" id="TIGR03242">
    <property type="entry name" value="arg_catab_astE"/>
    <property type="match status" value="1"/>
</dbReference>
<dbReference type="NCBIfam" id="NF003706">
    <property type="entry name" value="PRK05324.1"/>
    <property type="match status" value="1"/>
</dbReference>
<dbReference type="PANTHER" id="PTHR15162">
    <property type="entry name" value="ASPARTOACYLASE"/>
    <property type="match status" value="1"/>
</dbReference>
<dbReference type="PANTHER" id="PTHR15162:SF7">
    <property type="entry name" value="SUCCINYLGLUTAMATE DESUCCINYLASE"/>
    <property type="match status" value="1"/>
</dbReference>
<dbReference type="Pfam" id="PF24827">
    <property type="entry name" value="AstE_AspA_cat"/>
    <property type="match status" value="1"/>
</dbReference>
<dbReference type="Pfam" id="PF04952">
    <property type="entry name" value="AstE_AspA_hybrid"/>
    <property type="match status" value="1"/>
</dbReference>
<dbReference type="PIRSF" id="PIRSF017020">
    <property type="entry name" value="AstE"/>
    <property type="match status" value="1"/>
</dbReference>
<dbReference type="SUPFAM" id="SSF53187">
    <property type="entry name" value="Zn-dependent exopeptidases"/>
    <property type="match status" value="1"/>
</dbReference>
<protein>
    <recommendedName>
        <fullName evidence="1">Succinylglutamate desuccinylase</fullName>
        <ecNumber evidence="1">3.5.1.96</ecNumber>
    </recommendedName>
</protein>
<name>ASTE_ESCF3</name>
<accession>B7LQ48</accession>
<reference key="1">
    <citation type="journal article" date="2009" name="PLoS Genet.">
        <title>Organised genome dynamics in the Escherichia coli species results in highly diverse adaptive paths.</title>
        <authorList>
            <person name="Touchon M."/>
            <person name="Hoede C."/>
            <person name="Tenaillon O."/>
            <person name="Barbe V."/>
            <person name="Baeriswyl S."/>
            <person name="Bidet P."/>
            <person name="Bingen E."/>
            <person name="Bonacorsi S."/>
            <person name="Bouchier C."/>
            <person name="Bouvet O."/>
            <person name="Calteau A."/>
            <person name="Chiapello H."/>
            <person name="Clermont O."/>
            <person name="Cruveiller S."/>
            <person name="Danchin A."/>
            <person name="Diard M."/>
            <person name="Dossat C."/>
            <person name="Karoui M.E."/>
            <person name="Frapy E."/>
            <person name="Garry L."/>
            <person name="Ghigo J.M."/>
            <person name="Gilles A.M."/>
            <person name="Johnson J."/>
            <person name="Le Bouguenec C."/>
            <person name="Lescat M."/>
            <person name="Mangenot S."/>
            <person name="Martinez-Jehanne V."/>
            <person name="Matic I."/>
            <person name="Nassif X."/>
            <person name="Oztas S."/>
            <person name="Petit M.A."/>
            <person name="Pichon C."/>
            <person name="Rouy Z."/>
            <person name="Ruf C.S."/>
            <person name="Schneider D."/>
            <person name="Tourret J."/>
            <person name="Vacherie B."/>
            <person name="Vallenet D."/>
            <person name="Medigue C."/>
            <person name="Rocha E.P.C."/>
            <person name="Denamur E."/>
        </authorList>
    </citation>
    <scope>NUCLEOTIDE SEQUENCE [LARGE SCALE GENOMIC DNA]</scope>
    <source>
        <strain>ATCC 35469 / DSM 13698 / BCRC 15582 / CCUG 18766 / IAM 14443 / JCM 21226 / LMG 7866 / NBRC 102419 / NCTC 12128 / CDC 0568-73</strain>
    </source>
</reference>
<feature type="chain" id="PRO_1000133635" description="Succinylglutamate desuccinylase">
    <location>
        <begin position="1"/>
        <end position="322"/>
    </location>
</feature>
<feature type="active site" evidence="1">
    <location>
        <position position="210"/>
    </location>
</feature>
<feature type="binding site" evidence="1">
    <location>
        <position position="53"/>
    </location>
    <ligand>
        <name>Zn(2+)</name>
        <dbReference type="ChEBI" id="CHEBI:29105"/>
    </ligand>
</feature>
<feature type="binding site" evidence="1">
    <location>
        <position position="56"/>
    </location>
    <ligand>
        <name>Zn(2+)</name>
        <dbReference type="ChEBI" id="CHEBI:29105"/>
    </ligand>
</feature>
<feature type="binding site" evidence="1">
    <location>
        <position position="147"/>
    </location>
    <ligand>
        <name>Zn(2+)</name>
        <dbReference type="ChEBI" id="CHEBI:29105"/>
    </ligand>
</feature>
<comment type="function">
    <text evidence="1">Transforms N(2)-succinylglutamate into succinate and glutamate.</text>
</comment>
<comment type="catalytic activity">
    <reaction evidence="1">
        <text>N-succinyl-L-glutamate + H2O = L-glutamate + succinate</text>
        <dbReference type="Rhea" id="RHEA:15169"/>
        <dbReference type="ChEBI" id="CHEBI:15377"/>
        <dbReference type="ChEBI" id="CHEBI:29985"/>
        <dbReference type="ChEBI" id="CHEBI:30031"/>
        <dbReference type="ChEBI" id="CHEBI:58763"/>
        <dbReference type="EC" id="3.5.1.96"/>
    </reaction>
</comment>
<comment type="cofactor">
    <cofactor evidence="1">
        <name>Zn(2+)</name>
        <dbReference type="ChEBI" id="CHEBI:29105"/>
    </cofactor>
    <text evidence="1">Binds 1 zinc ion per subunit.</text>
</comment>
<comment type="pathway">
    <text evidence="1">Amino-acid degradation; L-arginine degradation via AST pathway; L-glutamate and succinate from L-arginine: step 5/5.</text>
</comment>
<comment type="similarity">
    <text evidence="1">Belongs to the AspA/AstE family. Succinylglutamate desuccinylase subfamily.</text>
</comment>
<evidence type="ECO:0000255" key="1">
    <source>
        <dbReference type="HAMAP-Rule" id="MF_00767"/>
    </source>
</evidence>
<keyword id="KW-0056">Arginine metabolism</keyword>
<keyword id="KW-0378">Hydrolase</keyword>
<keyword id="KW-0479">Metal-binding</keyword>
<keyword id="KW-0862">Zinc</keyword>